<feature type="chain" id="PRO_0000302888" description="S-adenosylmethionine synthase">
    <location>
        <begin position="1"/>
        <end position="393"/>
    </location>
</feature>
<feature type="region of interest" description="Flexible loop" evidence="1">
    <location>
        <begin position="100"/>
        <end position="110"/>
    </location>
</feature>
<feature type="binding site" description="in other chain" evidence="1">
    <location>
        <position position="16"/>
    </location>
    <ligand>
        <name>ATP</name>
        <dbReference type="ChEBI" id="CHEBI:30616"/>
        <note>ligand shared between two neighboring subunits</note>
    </ligand>
</feature>
<feature type="binding site" evidence="1">
    <location>
        <position position="18"/>
    </location>
    <ligand>
        <name>Mg(2+)</name>
        <dbReference type="ChEBI" id="CHEBI:18420"/>
    </ligand>
</feature>
<feature type="binding site" evidence="1">
    <location>
        <position position="44"/>
    </location>
    <ligand>
        <name>K(+)</name>
        <dbReference type="ChEBI" id="CHEBI:29103"/>
    </ligand>
</feature>
<feature type="binding site" description="in other chain" evidence="1">
    <location>
        <position position="57"/>
    </location>
    <ligand>
        <name>L-methionine</name>
        <dbReference type="ChEBI" id="CHEBI:57844"/>
        <note>ligand shared between two neighboring subunits</note>
    </ligand>
</feature>
<feature type="binding site" description="in other chain" evidence="1">
    <location>
        <position position="100"/>
    </location>
    <ligand>
        <name>L-methionine</name>
        <dbReference type="ChEBI" id="CHEBI:57844"/>
        <note>ligand shared between two neighboring subunits</note>
    </ligand>
</feature>
<feature type="binding site" description="in other chain" evidence="1">
    <location>
        <begin position="167"/>
        <end position="169"/>
    </location>
    <ligand>
        <name>ATP</name>
        <dbReference type="ChEBI" id="CHEBI:30616"/>
        <note>ligand shared between two neighboring subunits</note>
    </ligand>
</feature>
<feature type="binding site" description="in other chain" evidence="1">
    <location>
        <begin position="238"/>
        <end position="239"/>
    </location>
    <ligand>
        <name>ATP</name>
        <dbReference type="ChEBI" id="CHEBI:30616"/>
        <note>ligand shared between two neighboring subunits</note>
    </ligand>
</feature>
<feature type="binding site" evidence="1">
    <location>
        <position position="247"/>
    </location>
    <ligand>
        <name>ATP</name>
        <dbReference type="ChEBI" id="CHEBI:30616"/>
        <note>ligand shared between two neighboring subunits</note>
    </ligand>
</feature>
<feature type="binding site" evidence="1">
    <location>
        <position position="247"/>
    </location>
    <ligand>
        <name>L-methionine</name>
        <dbReference type="ChEBI" id="CHEBI:57844"/>
        <note>ligand shared between two neighboring subunits</note>
    </ligand>
</feature>
<feature type="binding site" description="in other chain" evidence="1">
    <location>
        <begin position="253"/>
        <end position="254"/>
    </location>
    <ligand>
        <name>ATP</name>
        <dbReference type="ChEBI" id="CHEBI:30616"/>
        <note>ligand shared between two neighboring subunits</note>
    </ligand>
</feature>
<feature type="binding site" evidence="1">
    <location>
        <position position="270"/>
    </location>
    <ligand>
        <name>ATP</name>
        <dbReference type="ChEBI" id="CHEBI:30616"/>
        <note>ligand shared between two neighboring subunits</note>
    </ligand>
</feature>
<feature type="binding site" evidence="1">
    <location>
        <position position="274"/>
    </location>
    <ligand>
        <name>ATP</name>
        <dbReference type="ChEBI" id="CHEBI:30616"/>
        <note>ligand shared between two neighboring subunits</note>
    </ligand>
</feature>
<feature type="binding site" description="in other chain" evidence="1">
    <location>
        <position position="278"/>
    </location>
    <ligand>
        <name>L-methionine</name>
        <dbReference type="ChEBI" id="CHEBI:57844"/>
        <note>ligand shared between two neighboring subunits</note>
    </ligand>
</feature>
<name>METK_PARC0</name>
<keyword id="KW-0067">ATP-binding</keyword>
<keyword id="KW-0963">Cytoplasm</keyword>
<keyword id="KW-0460">Magnesium</keyword>
<keyword id="KW-0479">Metal-binding</keyword>
<keyword id="KW-0547">Nucleotide-binding</keyword>
<keyword id="KW-0554">One-carbon metabolism</keyword>
<keyword id="KW-0630">Potassium</keyword>
<keyword id="KW-0808">Transferase</keyword>
<evidence type="ECO:0000255" key="1">
    <source>
        <dbReference type="HAMAP-Rule" id="MF_00086"/>
    </source>
</evidence>
<reference key="1">
    <citation type="submission" date="2006-12" db="EMBL/GenBank/DDBJ databases">
        <title>Complete sequence of Acidovorax avenae subsp. citrulli AAC00-1.</title>
        <authorList>
            <person name="Copeland A."/>
            <person name="Lucas S."/>
            <person name="Lapidus A."/>
            <person name="Barry K."/>
            <person name="Detter J.C."/>
            <person name="Glavina del Rio T."/>
            <person name="Dalin E."/>
            <person name="Tice H."/>
            <person name="Pitluck S."/>
            <person name="Kiss H."/>
            <person name="Brettin T."/>
            <person name="Bruce D."/>
            <person name="Han C."/>
            <person name="Tapia R."/>
            <person name="Gilna P."/>
            <person name="Schmutz J."/>
            <person name="Larimer F."/>
            <person name="Land M."/>
            <person name="Hauser L."/>
            <person name="Kyrpides N."/>
            <person name="Kim E."/>
            <person name="Stahl D."/>
            <person name="Richardson P."/>
        </authorList>
    </citation>
    <scope>NUCLEOTIDE SEQUENCE [LARGE SCALE GENOMIC DNA]</scope>
    <source>
        <strain>AAC00-1</strain>
    </source>
</reference>
<sequence>MANDFLFTSESVSEGHPDKVADQISDAILDAIFREDPRSRVAAETLTNTGLVVLAGEITTNAHVDYIQVARDTIKRIGYDNTDYGIDYKGCAVLVAYDKQSNDIAQGVDHASDDHLNTGAGDQGLMFGYACDETPELMPAPIYYAHRLVERQAQLRKDGRLPFLRPDAKSQVTMRYVDGKPHSIDTVVLSTQHHPDQSETATRMKASFIEAVIEEIIKPVLPKEWLQETKYLINPTGRFVIGGPQGDCGLTGRKIIVDTYGGACPHGGGAFSGKDPTKVDRSAAYAARYVAKNIVAAGLARQCQIQVSYAIGVARPINVTVYTEGTGVIPDEKIAALVQEHFDLRPKGIIQMLDLLRPIYEKTAAYGHFGREEPEFTWEKTDKAAALRAAAGL</sequence>
<proteinExistence type="inferred from homology"/>
<dbReference type="EC" id="2.5.1.6" evidence="1"/>
<dbReference type="EMBL" id="CP000512">
    <property type="protein sequence ID" value="ABM31577.1"/>
    <property type="molecule type" value="Genomic_DNA"/>
</dbReference>
<dbReference type="RefSeq" id="WP_011794135.1">
    <property type="nucleotide sequence ID" value="NC_008752.1"/>
</dbReference>
<dbReference type="SMR" id="A1TKT9"/>
<dbReference type="STRING" id="397945.Aave_0979"/>
<dbReference type="GeneID" id="79790634"/>
<dbReference type="KEGG" id="aav:Aave_0979"/>
<dbReference type="eggNOG" id="COG0192">
    <property type="taxonomic scope" value="Bacteria"/>
</dbReference>
<dbReference type="HOGENOM" id="CLU_041802_1_1_4"/>
<dbReference type="OrthoDB" id="9801686at2"/>
<dbReference type="UniPathway" id="UPA00315">
    <property type="reaction ID" value="UER00080"/>
</dbReference>
<dbReference type="Proteomes" id="UP000002596">
    <property type="component" value="Chromosome"/>
</dbReference>
<dbReference type="GO" id="GO:0005737">
    <property type="term" value="C:cytoplasm"/>
    <property type="evidence" value="ECO:0007669"/>
    <property type="project" value="UniProtKB-SubCell"/>
</dbReference>
<dbReference type="GO" id="GO:0005524">
    <property type="term" value="F:ATP binding"/>
    <property type="evidence" value="ECO:0007669"/>
    <property type="project" value="UniProtKB-UniRule"/>
</dbReference>
<dbReference type="GO" id="GO:0000287">
    <property type="term" value="F:magnesium ion binding"/>
    <property type="evidence" value="ECO:0007669"/>
    <property type="project" value="UniProtKB-UniRule"/>
</dbReference>
<dbReference type="GO" id="GO:0004478">
    <property type="term" value="F:methionine adenosyltransferase activity"/>
    <property type="evidence" value="ECO:0007669"/>
    <property type="project" value="UniProtKB-UniRule"/>
</dbReference>
<dbReference type="GO" id="GO:0006730">
    <property type="term" value="P:one-carbon metabolic process"/>
    <property type="evidence" value="ECO:0007669"/>
    <property type="project" value="UniProtKB-KW"/>
</dbReference>
<dbReference type="GO" id="GO:0006556">
    <property type="term" value="P:S-adenosylmethionine biosynthetic process"/>
    <property type="evidence" value="ECO:0007669"/>
    <property type="project" value="UniProtKB-UniRule"/>
</dbReference>
<dbReference type="CDD" id="cd18079">
    <property type="entry name" value="S-AdoMet_synt"/>
    <property type="match status" value="1"/>
</dbReference>
<dbReference type="FunFam" id="3.30.300.10:FF:000003">
    <property type="entry name" value="S-adenosylmethionine synthase"/>
    <property type="match status" value="1"/>
</dbReference>
<dbReference type="FunFam" id="3.30.300.10:FF:000004">
    <property type="entry name" value="S-adenosylmethionine synthase"/>
    <property type="match status" value="1"/>
</dbReference>
<dbReference type="Gene3D" id="3.30.300.10">
    <property type="match status" value="3"/>
</dbReference>
<dbReference type="HAMAP" id="MF_00086">
    <property type="entry name" value="S_AdoMet_synth1"/>
    <property type="match status" value="1"/>
</dbReference>
<dbReference type="InterPro" id="IPR022631">
    <property type="entry name" value="ADOMET_SYNTHASE_CS"/>
</dbReference>
<dbReference type="InterPro" id="IPR022630">
    <property type="entry name" value="S-AdoMet_synt_C"/>
</dbReference>
<dbReference type="InterPro" id="IPR022629">
    <property type="entry name" value="S-AdoMet_synt_central"/>
</dbReference>
<dbReference type="InterPro" id="IPR022628">
    <property type="entry name" value="S-AdoMet_synt_N"/>
</dbReference>
<dbReference type="InterPro" id="IPR002133">
    <property type="entry name" value="S-AdoMet_synthetase"/>
</dbReference>
<dbReference type="InterPro" id="IPR022636">
    <property type="entry name" value="S-AdoMet_synthetase_sfam"/>
</dbReference>
<dbReference type="NCBIfam" id="TIGR01034">
    <property type="entry name" value="metK"/>
    <property type="match status" value="1"/>
</dbReference>
<dbReference type="PANTHER" id="PTHR11964">
    <property type="entry name" value="S-ADENOSYLMETHIONINE SYNTHETASE"/>
    <property type="match status" value="1"/>
</dbReference>
<dbReference type="Pfam" id="PF02773">
    <property type="entry name" value="S-AdoMet_synt_C"/>
    <property type="match status" value="1"/>
</dbReference>
<dbReference type="Pfam" id="PF02772">
    <property type="entry name" value="S-AdoMet_synt_M"/>
    <property type="match status" value="1"/>
</dbReference>
<dbReference type="Pfam" id="PF00438">
    <property type="entry name" value="S-AdoMet_synt_N"/>
    <property type="match status" value="1"/>
</dbReference>
<dbReference type="PIRSF" id="PIRSF000497">
    <property type="entry name" value="MAT"/>
    <property type="match status" value="1"/>
</dbReference>
<dbReference type="SUPFAM" id="SSF55973">
    <property type="entry name" value="S-adenosylmethionine synthetase"/>
    <property type="match status" value="3"/>
</dbReference>
<dbReference type="PROSITE" id="PS00376">
    <property type="entry name" value="ADOMET_SYNTHASE_1"/>
    <property type="match status" value="1"/>
</dbReference>
<dbReference type="PROSITE" id="PS00377">
    <property type="entry name" value="ADOMET_SYNTHASE_2"/>
    <property type="match status" value="1"/>
</dbReference>
<gene>
    <name evidence="1" type="primary">metK</name>
    <name type="ordered locus">Aave_0979</name>
</gene>
<protein>
    <recommendedName>
        <fullName evidence="1">S-adenosylmethionine synthase</fullName>
        <shortName evidence="1">AdoMet synthase</shortName>
        <ecNumber evidence="1">2.5.1.6</ecNumber>
    </recommendedName>
    <alternativeName>
        <fullName evidence="1">MAT</fullName>
    </alternativeName>
    <alternativeName>
        <fullName evidence="1">Methionine adenosyltransferase</fullName>
    </alternativeName>
</protein>
<organism>
    <name type="scientific">Paracidovorax citrulli (strain AAC00-1)</name>
    <name type="common">Acidovorax citrulli</name>
    <dbReference type="NCBI Taxonomy" id="397945"/>
    <lineage>
        <taxon>Bacteria</taxon>
        <taxon>Pseudomonadati</taxon>
        <taxon>Pseudomonadota</taxon>
        <taxon>Betaproteobacteria</taxon>
        <taxon>Burkholderiales</taxon>
        <taxon>Comamonadaceae</taxon>
        <taxon>Paracidovorax</taxon>
    </lineage>
</organism>
<accession>A1TKT9</accession>
<comment type="function">
    <text evidence="1">Catalyzes the formation of S-adenosylmethionine (AdoMet) from methionine and ATP. The overall synthetic reaction is composed of two sequential steps, AdoMet formation and the subsequent tripolyphosphate hydrolysis which occurs prior to release of AdoMet from the enzyme.</text>
</comment>
<comment type="catalytic activity">
    <reaction evidence="1">
        <text>L-methionine + ATP + H2O = S-adenosyl-L-methionine + phosphate + diphosphate</text>
        <dbReference type="Rhea" id="RHEA:21080"/>
        <dbReference type="ChEBI" id="CHEBI:15377"/>
        <dbReference type="ChEBI" id="CHEBI:30616"/>
        <dbReference type="ChEBI" id="CHEBI:33019"/>
        <dbReference type="ChEBI" id="CHEBI:43474"/>
        <dbReference type="ChEBI" id="CHEBI:57844"/>
        <dbReference type="ChEBI" id="CHEBI:59789"/>
        <dbReference type="EC" id="2.5.1.6"/>
    </reaction>
</comment>
<comment type="cofactor">
    <cofactor evidence="1">
        <name>Mg(2+)</name>
        <dbReference type="ChEBI" id="CHEBI:18420"/>
    </cofactor>
    <text evidence="1">Binds 2 divalent ions per subunit.</text>
</comment>
<comment type="cofactor">
    <cofactor evidence="1">
        <name>K(+)</name>
        <dbReference type="ChEBI" id="CHEBI:29103"/>
    </cofactor>
    <text evidence="1">Binds 1 potassium ion per subunit.</text>
</comment>
<comment type="pathway">
    <text evidence="1">Amino-acid biosynthesis; S-adenosyl-L-methionine biosynthesis; S-adenosyl-L-methionine from L-methionine: step 1/1.</text>
</comment>
<comment type="subunit">
    <text evidence="1">Homotetramer; dimer of dimers.</text>
</comment>
<comment type="subcellular location">
    <subcellularLocation>
        <location evidence="1">Cytoplasm</location>
    </subcellularLocation>
</comment>
<comment type="similarity">
    <text evidence="1">Belongs to the AdoMet synthase family.</text>
</comment>